<accession>P0A8M3</accession>
<accession>P00955</accession>
<accession>P78166</accession>
<accession>P78241</accession>
<keyword id="KW-0002">3D-structure</keyword>
<keyword id="KW-0007">Acetylation</keyword>
<keyword id="KW-0030">Aminoacyl-tRNA synthetase</keyword>
<keyword id="KW-0046">Antibiotic resistance</keyword>
<keyword id="KW-0067">ATP-binding</keyword>
<keyword id="KW-0963">Cytoplasm</keyword>
<keyword id="KW-0436">Ligase</keyword>
<keyword id="KW-0479">Metal-binding</keyword>
<keyword id="KW-0547">Nucleotide-binding</keyword>
<keyword id="KW-0648">Protein biosynthesis</keyword>
<keyword id="KW-1185">Reference proteome</keyword>
<keyword id="KW-0678">Repressor</keyword>
<keyword id="KW-0694">RNA-binding</keyword>
<keyword id="KW-0810">Translation regulation</keyword>
<keyword id="KW-0820">tRNA-binding</keyword>
<keyword id="KW-0862">Zinc</keyword>
<protein>
    <recommendedName>
        <fullName evidence="1">Threonine--tRNA ligase</fullName>
        <ecNumber evidence="1 3">6.1.1.3</ecNumber>
    </recommendedName>
    <alternativeName>
        <fullName evidence="1">Threonyl-tRNA synthetase</fullName>
        <shortName evidence="1">ThrRS</shortName>
    </alternativeName>
</protein>
<organism>
    <name type="scientific">Escherichia coli (strain K12)</name>
    <dbReference type="NCBI Taxonomy" id="83333"/>
    <lineage>
        <taxon>Bacteria</taxon>
        <taxon>Pseudomonadati</taxon>
        <taxon>Pseudomonadota</taxon>
        <taxon>Gammaproteobacteria</taxon>
        <taxon>Enterobacterales</taxon>
        <taxon>Enterobacteriaceae</taxon>
        <taxon>Escherichia</taxon>
    </lineage>
</organism>
<sequence>MPVITLPDGSQRHYDHAVSPMDVALDIGPGLAKACIAGRVNGELVDACDLIENDAQLSIITAKDEEGLEIIRHSCAHLLGHAIKQLWPHTKMAIGPVIDNGFYYDVDLDRTLTQEDVEALEKRMHELAEKNYDVIKKKVSWHEARETFANRGESYKVSILDENIAHDDKPGLYFHEEYVDMCRGPHVPNMRFCHHFKLMKTAGAYWRGDSNNKMLQRIYGTAWADKKALNAYLQRLEEAAKRDHRKIGKQLDLYHMQEEAPGMVFWHNDGWTIFRELEVFVRSKLKEYQYQEVKGPFMMDRVLWEKTGHWDNYKDAMFTTSSENREYCIKPMNCPGHVQIFNQGLKSYRDLPLRMAEFGSCHRNEPSGSLHGLMRVRGFTQDDAHIFCTEEQIRDEVNGCIRLVYDMYSTFGFEKIVVKLSTRPEKRIGSDEMWDRAEADLAVALEENNIPFEYQLGEGAFYGPKIEFTLYDCLDRAWQCGTVQLDFSLPSRLSASYVGEDNERKVPVMIHRAILGSMERFIGILTEEFAGFFPTWLAPVQVVIMNITDSQSEYVNELTQKLSNAGIRVKADLRNEKIGFKIREHTLRRVPYMLVCGDKEVESGKVAVRTRRGKDLGSMDVNEVIEKLQQEIRSRSLKQLEE</sequence>
<feature type="chain" id="PRO_0000100973" description="Threonine--tRNA ligase">
    <location>
        <begin position="1"/>
        <end position="642"/>
    </location>
</feature>
<feature type="domain" description="TGS" evidence="2">
    <location>
        <begin position="1"/>
        <end position="61"/>
    </location>
</feature>
<feature type="region of interest" description="Correctly edits mischarged seryl-tRNA(Thr)" evidence="9">
    <location>
        <begin position="1"/>
        <end position="224"/>
    </location>
</feature>
<feature type="region of interest" description="N1 domain" evidence="17">
    <location>
        <begin position="1"/>
        <end position="62"/>
    </location>
</feature>
<feature type="region of interest" description="N-terminal region which includes the editing domain, important for catalytic efficiency, its loss increases mischarging with L-serine, deacylation of incorrectly charged tRNA no longer occurs, partially complements a deletion strain" evidence="3">
    <location>
        <begin position="2"/>
        <end position="241"/>
    </location>
</feature>
<feature type="region of interest" description="N2 domain, the editing domain" evidence="17">
    <location>
        <begin position="63"/>
        <end position="224"/>
    </location>
</feature>
<feature type="region of interest" description="tRNA acceptor stem binding" evidence="3">
    <location>
        <begin position="200"/>
        <end position="219"/>
    </location>
</feature>
<feature type="region of interest" description="Catalytic" evidence="1 17">
    <location>
        <begin position="243"/>
        <end position="534"/>
    </location>
</feature>
<feature type="region of interest" description="Anticodon recognition" evidence="17">
    <location>
        <begin position="535"/>
        <end position="642"/>
    </location>
</feature>
<feature type="binding site" evidence="6">
    <location>
        <begin position="246"/>
        <end position="249"/>
    </location>
    <ligand>
        <name>mRNA</name>
        <dbReference type="ChEBI" id="CHEBI:33699"/>
    </ligand>
    <ligandPart>
        <name>operator</name>
    </ligandPart>
</feature>
<feature type="binding site" evidence="3 23">
    <location>
        <position position="309"/>
    </location>
    <ligand>
        <name>tRNA(Thr)</name>
        <dbReference type="ChEBI" id="CHEBI:29180"/>
    </ligand>
    <ligandPart>
        <name>AMP 3'-end residue</name>
        <dbReference type="ChEBI" id="CHEBI:78442"/>
    </ligandPart>
</feature>
<feature type="binding site" evidence="3">
    <location>
        <begin position="313"/>
        <end position="317"/>
    </location>
    <ligand>
        <name>tRNA</name>
        <dbReference type="ChEBI" id="CHEBI:17843"/>
    </ligand>
    <ligandPart>
        <name>tRNA 3'-terminal nucleotidyl-cytidyl-cytidyl-adenosine residue</name>
        <dbReference type="ChEBI" id="CHEBI:83071"/>
    </ligandPart>
</feature>
<feature type="binding site" evidence="3">
    <location>
        <position position="325"/>
    </location>
    <ligand>
        <name>tRNA(Thr)</name>
        <dbReference type="ChEBI" id="CHEBI:29180"/>
    </ligand>
</feature>
<feature type="binding site" evidence="1 3 4 5 6">
    <location>
        <position position="334"/>
    </location>
    <ligand>
        <name>Zn(2+)</name>
        <dbReference type="ChEBI" id="CHEBI:29105"/>
    </ligand>
</feature>
<feature type="binding site" evidence="6">
    <location>
        <begin position="342"/>
        <end position="349"/>
    </location>
    <ligand>
        <name>mRNA</name>
        <dbReference type="ChEBI" id="CHEBI:33699"/>
    </ligand>
    <ligandPart>
        <name>operator</name>
    </ligandPart>
</feature>
<feature type="binding site" evidence="3">
    <location>
        <begin position="348"/>
        <end position="349"/>
    </location>
    <ligand>
        <name>tRNA(Thr)</name>
        <dbReference type="ChEBI" id="CHEBI:29180"/>
    </ligand>
</feature>
<feature type="binding site" evidence="3 23">
    <location>
        <begin position="363"/>
        <end position="365"/>
    </location>
    <ligand>
        <name>AMP</name>
        <dbReference type="ChEBI" id="CHEBI:456215"/>
    </ligand>
</feature>
<feature type="binding site" evidence="3">
    <location>
        <position position="363"/>
    </location>
    <ligand>
        <name>tRNA</name>
        <dbReference type="ChEBI" id="CHEBI:17843"/>
    </ligand>
    <ligandPart>
        <name>tRNA 3'-terminal nucleotidyl-cytidyl-cytidyl-adenosine residue</name>
        <dbReference type="ChEBI" id="CHEBI:83071"/>
    </ligandPart>
</feature>
<feature type="binding site" evidence="3">
    <location>
        <position position="375"/>
    </location>
    <ligand>
        <name>tRNA</name>
        <dbReference type="ChEBI" id="CHEBI:17843"/>
    </ligand>
    <ligandPart>
        <name>tRNA 3'-terminal nucleotidyl-cytidyl-cytidyl-adenosine residue</name>
        <dbReference type="ChEBI" id="CHEBI:83071"/>
    </ligandPart>
</feature>
<feature type="binding site" evidence="3 23">
    <location>
        <position position="376"/>
    </location>
    <ligand>
        <name>AMP</name>
        <dbReference type="ChEBI" id="CHEBI:456215"/>
    </ligand>
</feature>
<feature type="binding site" evidence="3">
    <location>
        <position position="379"/>
    </location>
    <ligand>
        <name>AMP</name>
        <dbReference type="ChEBI" id="CHEBI:456215"/>
    </ligand>
</feature>
<feature type="binding site" evidence="3 23">
    <location>
        <position position="381"/>
    </location>
    <ligand>
        <name>AMP</name>
        <dbReference type="ChEBI" id="CHEBI:456215"/>
    </ligand>
</feature>
<feature type="binding site" evidence="1 3 4 5 6">
    <location>
        <position position="385"/>
    </location>
    <ligand>
        <name>Zn(2+)</name>
        <dbReference type="ChEBI" id="CHEBI:29105"/>
    </ligand>
</feature>
<feature type="binding site" evidence="3">
    <location>
        <position position="462"/>
    </location>
    <ligand>
        <name>tRNA</name>
        <dbReference type="ChEBI" id="CHEBI:17843"/>
    </ligand>
    <ligandPart>
        <name>tRNA 3'-terminal nucleotidyl-cytidyl-cytidyl-adenosine residue</name>
        <dbReference type="ChEBI" id="CHEBI:83071"/>
    </ligandPart>
</feature>
<feature type="binding site" evidence="3 23">
    <location>
        <begin position="479"/>
        <end position="480"/>
    </location>
    <ligand>
        <name>AMP</name>
        <dbReference type="ChEBI" id="CHEBI:456215"/>
    </ligand>
</feature>
<feature type="binding site" evidence="3">
    <location>
        <position position="484"/>
    </location>
    <ligand>
        <name>tRNA</name>
        <dbReference type="ChEBI" id="CHEBI:17843"/>
    </ligand>
    <ligandPart>
        <name>tRNA 3'-terminal nucleotidyl-cytidyl-cytidyl-adenosine residue</name>
        <dbReference type="ChEBI" id="CHEBI:83071"/>
    </ligandPart>
</feature>
<feature type="binding site" evidence="6">
    <location>
        <begin position="489"/>
        <end position="503"/>
    </location>
    <ligand>
        <name>mRNA</name>
        <dbReference type="ChEBI" id="CHEBI:33699"/>
    </ligand>
    <ligandPart>
        <name>operator</name>
    </ligandPart>
</feature>
<feature type="binding site" evidence="1 3 4 5">
    <location>
        <position position="511"/>
    </location>
    <ligand>
        <name>Zn(2+)</name>
        <dbReference type="ChEBI" id="CHEBI:29105"/>
    </ligand>
</feature>
<feature type="binding site" evidence="3 23">
    <location>
        <position position="517"/>
    </location>
    <ligand>
        <name>AMP</name>
        <dbReference type="ChEBI" id="CHEBI:456215"/>
    </ligand>
</feature>
<feature type="binding site" evidence="3">
    <location>
        <position position="520"/>
    </location>
    <ligand>
        <name>AMP</name>
        <dbReference type="ChEBI" id="CHEBI:456215"/>
    </ligand>
</feature>
<feature type="binding site" evidence="6">
    <location>
        <begin position="547"/>
        <end position="549"/>
    </location>
    <ligand>
        <name>mRNA</name>
        <dbReference type="ChEBI" id="CHEBI:33699"/>
    </ligand>
    <ligandPart>
        <name>operator</name>
    </ligandPart>
</feature>
<feature type="binding site" evidence="3">
    <location>
        <begin position="547"/>
        <end position="549"/>
    </location>
    <ligand>
        <name>tRNA</name>
        <dbReference type="ChEBI" id="CHEBI:17843"/>
    </ligand>
    <ligandPart>
        <name>anticodon region</name>
    </ligandPart>
</feature>
<feature type="binding site" evidence="6">
    <location>
        <begin position="575"/>
        <end position="586"/>
    </location>
    <ligand>
        <name>mRNA</name>
        <dbReference type="ChEBI" id="CHEBI:33699"/>
    </ligand>
    <ligandPart>
        <name>operator</name>
    </ligandPart>
</feature>
<feature type="binding site" evidence="3">
    <location>
        <begin position="575"/>
        <end position="583"/>
    </location>
    <ligand>
        <name>tRNA</name>
        <dbReference type="ChEBI" id="CHEBI:17843"/>
    </ligand>
    <ligandPart>
        <name>anticodon region</name>
    </ligandPart>
</feature>
<feature type="binding site" evidence="3">
    <location>
        <position position="589"/>
    </location>
    <ligand>
        <name>tRNA</name>
        <dbReference type="ChEBI" id="CHEBI:17843"/>
    </ligand>
    <ligandPart>
        <name>anticodon region</name>
    </ligandPart>
</feature>
<feature type="binding site" evidence="6">
    <location>
        <begin position="595"/>
        <end position="600"/>
    </location>
    <ligand>
        <name>mRNA</name>
        <dbReference type="ChEBI" id="CHEBI:33699"/>
    </ligand>
    <ligandPart>
        <name>operator</name>
    </ligandPart>
</feature>
<feature type="binding site" evidence="3">
    <location>
        <begin position="595"/>
        <end position="600"/>
    </location>
    <ligand>
        <name>tRNA</name>
        <dbReference type="ChEBI" id="CHEBI:17843"/>
    </ligand>
    <ligandPart>
        <name>anticodon region</name>
    </ligandPart>
</feature>
<feature type="binding site" evidence="6">
    <location>
        <position position="609"/>
    </location>
    <ligand>
        <name>mRNA</name>
        <dbReference type="ChEBI" id="CHEBI:33699"/>
    </ligand>
    <ligandPart>
        <name>operator</name>
    </ligandPart>
</feature>
<feature type="binding site" evidence="3">
    <location>
        <position position="609"/>
    </location>
    <ligand>
        <name>tRNA</name>
        <dbReference type="ChEBI" id="CHEBI:17843"/>
    </ligand>
    <ligandPart>
        <name>anticodon region</name>
    </ligandPart>
</feature>
<feature type="binding site" evidence="6">
    <location>
        <position position="615"/>
    </location>
    <ligand>
        <name>mRNA</name>
        <dbReference type="ChEBI" id="CHEBI:33699"/>
    </ligand>
    <ligandPart>
        <name>operator</name>
    </ligandPart>
</feature>
<feature type="modified residue" description="N6-acetyllysine" evidence="1 10">
    <location>
        <position position="286"/>
    </location>
</feature>
<feature type="mutagenesis site" description="No longer edits mischarged L-seryl-tRNA(Thr), mischarges tRNA(Thr) with L-serine, correct acylation is unaffected." evidence="5">
    <original>HSCAH</original>
    <variation>ASCAA</variation>
    <location>
        <begin position="73"/>
        <end position="77"/>
    </location>
</feature>
<feature type="mutagenesis site" description="Mischarges tRNA(Thr) with L-serine." evidence="9">
    <original>K</original>
    <variation>A</variation>
    <location>
        <position position="156"/>
    </location>
</feature>
<feature type="mutagenesis site" description="No longer edits mischarged L-seryl-tRNA(Thr), mischarges tRNA(Thr) with L-serine, correct acylation is unaffected." evidence="5">
    <original>D</original>
    <variation>A</variation>
    <location>
        <position position="180"/>
    </location>
</feature>
<feature type="mutagenesis site" description="Very high mischarging of tRNA(Thr) with L-serine." evidence="9">
    <original>C</original>
    <variation>A</variation>
    <location>
        <position position="182"/>
    </location>
</feature>
<feature type="mutagenesis site" description="Mischarges tRNA(Thr) with L-serine." evidence="9">
    <original>H</original>
    <variation>A</variation>
    <location>
        <position position="186"/>
    </location>
</feature>
<feature type="mutagenesis site" description="Confers resistance to borrelidin (BN); KM for L-Thr is unchanged, KM for ATP increases to 187 uM, KI for BN increases to 4.5 nM." evidence="8">
    <original>P</original>
    <variation>S</variation>
    <location>
        <position position="296"/>
    </location>
</feature>
<feature type="mutagenesis site" description="KI for BN increases 10-fold, no change in aminoacylation activity." evidence="8">
    <original>T</original>
    <variation>A</variation>
    <location>
        <position position="307"/>
    </location>
</feature>
<feature type="mutagenesis site" description="10-fold increase in KM for Thr for activation, 240-fold decrease in aminoacyl transfer. Cells have a long lag phase and reach stationary phase at a lower cell density. KI for BN increases 1000-fold, supports growth in the presence of BN." evidence="8 11">
    <original>H</original>
    <variation>A</variation>
    <location>
        <position position="309"/>
    </location>
</feature>
<feature type="mutagenesis site" description="Does not complement a deletion strain." evidence="3">
    <original>C</original>
    <variation>S</variation>
    <location>
        <position position="334"/>
    </location>
</feature>
<feature type="mutagenesis site" description="KI for BN increases 12-fold, no change in aminoacylation activity, supports growth in the presence of BN." evidence="8">
    <original>H</original>
    <variation>A</variation>
    <location>
        <position position="337"/>
    </location>
</feature>
<feature type="mutagenesis site" description="700-fold decrease in kcat for Thr activation, 1000-fold decrease in kcat of aminoacylation, no change in KM." evidence="11">
    <original>R</original>
    <variation>A</variation>
    <location>
        <position position="363"/>
    </location>
</feature>
<feature type="mutagenesis site" description="100-fold increase in KM for Thr for activation." evidence="11">
    <original>Q</original>
    <variation>A</variation>
    <location>
        <position position="381"/>
    </location>
</feature>
<feature type="mutagenesis site" description="Does not complement a deletion strain." evidence="3">
    <original>H</original>
    <variation>A</variation>
    <variation>N</variation>
    <location>
        <position position="385"/>
    </location>
</feature>
<feature type="mutagenesis site" description="35-fold decrease in kcat for Thr activation, 570-fold decrease in kcat of aminoacylation, no change in KM." evidence="11">
    <original>K</original>
    <variation>A</variation>
    <location>
        <position position="465"/>
    </location>
</feature>
<feature type="mutagenesis site" description="Wild-type Thr activation and aminoacylation." evidence="11">
    <original>Q</original>
    <variation>A</variation>
    <location>
        <position position="479"/>
    </location>
</feature>
<feature type="mutagenesis site" description="Confers resistance to borrelidin (BN); KM for L-thr is unchanged, KM for ATP increases to 163 uM, KI for BN increases to 7.8 nM, supports growth in the presence of BN." evidence="8">
    <original>L</original>
    <variation>M</variation>
    <location>
        <position position="489"/>
    </location>
</feature>
<feature type="mutagenesis site" description="KI for BN increases 1500-fold, no change in aminoacylation activity, supports growth in the presence of BN." evidence="8">
    <original>L</original>
    <variation>W</variation>
    <location>
        <position position="489"/>
    </location>
</feature>
<feature type="mutagenesis site" description="Does not complement a deletion strain, has dominant lethal effect in presence of wild-type gene, probably due to repression of the wild-type gene." evidence="3">
    <original>H</original>
    <variation>A</variation>
    <variation>N</variation>
    <location>
        <position position="511"/>
    </location>
</feature>
<feature type="mutagenesis site" description="KI for BN increases 8-fold, decreases aminoacylation activity, does not support growth in the presence of BN." evidence="8">
    <original>G</original>
    <variation>GEGK</variation>
    <location>
        <position position="531"/>
    </location>
</feature>
<feature type="sequence conflict" description="In Ref. 1; CAA23560." evidence="16" ref="1">
    <original>H</original>
    <variation>R</variation>
    <location>
        <position position="195"/>
    </location>
</feature>
<feature type="strand" evidence="37">
    <location>
        <begin position="3"/>
        <end position="5"/>
    </location>
</feature>
<feature type="strand" evidence="37">
    <location>
        <begin position="11"/>
        <end position="13"/>
    </location>
</feature>
<feature type="helix" evidence="37">
    <location>
        <begin position="20"/>
        <end position="27"/>
    </location>
</feature>
<feature type="helix" evidence="37">
    <location>
        <begin position="29"/>
        <end position="34"/>
    </location>
</feature>
<feature type="strand" evidence="37">
    <location>
        <begin position="37"/>
        <end position="40"/>
    </location>
</feature>
<feature type="strand" evidence="37">
    <location>
        <begin position="43"/>
        <end position="46"/>
    </location>
</feature>
<feature type="strand" evidence="37">
    <location>
        <begin position="55"/>
        <end position="60"/>
    </location>
</feature>
<feature type="helix" evidence="37">
    <location>
        <begin position="65"/>
        <end position="86"/>
    </location>
</feature>
<feature type="strand" evidence="37">
    <location>
        <begin position="101"/>
        <end position="107"/>
    </location>
</feature>
<feature type="helix" evidence="37">
    <location>
        <begin position="114"/>
        <end position="128"/>
    </location>
</feature>
<feature type="strand" evidence="37">
    <location>
        <begin position="135"/>
        <end position="138"/>
    </location>
</feature>
<feature type="helix" evidence="37">
    <location>
        <begin position="141"/>
        <end position="150"/>
    </location>
</feature>
<feature type="helix" evidence="37">
    <location>
        <begin position="154"/>
        <end position="163"/>
    </location>
</feature>
<feature type="strand" evidence="37">
    <location>
        <begin position="171"/>
        <end position="175"/>
    </location>
</feature>
<feature type="strand" evidence="37">
    <location>
        <begin position="178"/>
        <end position="183"/>
    </location>
</feature>
<feature type="helix" evidence="37">
    <location>
        <begin position="190"/>
        <end position="192"/>
    </location>
</feature>
<feature type="strand" evidence="37">
    <location>
        <begin position="196"/>
        <end position="205"/>
    </location>
</feature>
<feature type="helix" evidence="37">
    <location>
        <begin position="206"/>
        <end position="208"/>
    </location>
</feature>
<feature type="strand" evidence="37">
    <location>
        <begin position="214"/>
        <end position="222"/>
    </location>
</feature>
<feature type="helix" evidence="36">
    <location>
        <begin position="226"/>
        <end position="240"/>
    </location>
</feature>
<feature type="helix" evidence="35">
    <location>
        <begin position="244"/>
        <end position="250"/>
    </location>
</feature>
<feature type="strand" evidence="40">
    <location>
        <begin position="254"/>
        <end position="257"/>
    </location>
</feature>
<feature type="strand" evidence="40">
    <location>
        <begin position="260"/>
        <end position="266"/>
    </location>
</feature>
<feature type="helix" evidence="35">
    <location>
        <begin position="268"/>
        <end position="287"/>
    </location>
</feature>
<feature type="strand" evidence="35">
    <location>
        <begin position="297"/>
        <end position="300"/>
    </location>
</feature>
<feature type="helix" evidence="35">
    <location>
        <begin position="301"/>
        <end position="306"/>
    </location>
</feature>
<feature type="helix" evidence="35">
    <location>
        <begin position="309"/>
        <end position="312"/>
    </location>
</feature>
<feature type="helix" evidence="35">
    <location>
        <begin position="314"/>
        <end position="316"/>
    </location>
</feature>
<feature type="strand" evidence="35">
    <location>
        <begin position="319"/>
        <end position="322"/>
    </location>
</feature>
<feature type="strand" evidence="35">
    <location>
        <begin position="325"/>
        <end position="329"/>
    </location>
</feature>
<feature type="strand" evidence="36">
    <location>
        <begin position="331"/>
        <end position="333"/>
    </location>
</feature>
<feature type="helix" evidence="35">
    <location>
        <begin position="334"/>
        <end position="341"/>
    </location>
</feature>
<feature type="helix" evidence="35">
    <location>
        <begin position="348"/>
        <end position="350"/>
    </location>
</feature>
<feature type="strand" evidence="35">
    <location>
        <begin position="352"/>
        <end position="362"/>
    </location>
</feature>
<feature type="helix" evidence="35">
    <location>
        <begin position="367"/>
        <end position="369"/>
    </location>
</feature>
<feature type="turn" evidence="35">
    <location>
        <begin position="372"/>
        <end position="374"/>
    </location>
</feature>
<feature type="strand" evidence="35">
    <location>
        <begin position="377"/>
        <end position="388"/>
    </location>
</feature>
<feature type="helix" evidence="35">
    <location>
        <begin position="390"/>
        <end position="392"/>
    </location>
</feature>
<feature type="helix" evidence="35">
    <location>
        <begin position="393"/>
        <end position="409"/>
    </location>
</feature>
<feature type="turn" evidence="35">
    <location>
        <begin position="410"/>
        <end position="412"/>
    </location>
</feature>
<feature type="strand" evidence="35">
    <location>
        <begin position="417"/>
        <end position="421"/>
    </location>
</feature>
<feature type="helix" evidence="35">
    <location>
        <begin position="431"/>
        <end position="447"/>
    </location>
</feature>
<feature type="strand" evidence="35">
    <location>
        <begin position="453"/>
        <end position="455"/>
    </location>
</feature>
<feature type="strand" evidence="38">
    <location>
        <begin position="461"/>
        <end position="463"/>
    </location>
</feature>
<feature type="strand" evidence="35">
    <location>
        <begin position="465"/>
        <end position="471"/>
    </location>
</feature>
<feature type="strand" evidence="35">
    <location>
        <begin position="477"/>
        <end position="488"/>
    </location>
</feature>
<feature type="helix" evidence="35">
    <location>
        <begin position="489"/>
        <end position="492"/>
    </location>
</feature>
<feature type="strand" evidence="34">
    <location>
        <begin position="502"/>
        <end position="505"/>
    </location>
</feature>
<feature type="strand" evidence="35">
    <location>
        <begin position="508"/>
        <end position="517"/>
    </location>
</feature>
<feature type="helix" evidence="35">
    <location>
        <begin position="518"/>
        <end position="529"/>
    </location>
</feature>
<feature type="turn" evidence="35">
    <location>
        <begin position="535"/>
        <end position="537"/>
    </location>
</feature>
<feature type="strand" evidence="35">
    <location>
        <begin position="542"/>
        <end position="548"/>
    </location>
</feature>
<feature type="helix" evidence="35">
    <location>
        <begin position="549"/>
        <end position="551"/>
    </location>
</feature>
<feature type="helix" evidence="35">
    <location>
        <begin position="552"/>
        <end position="564"/>
    </location>
</feature>
<feature type="strand" evidence="35">
    <location>
        <begin position="569"/>
        <end position="572"/>
    </location>
</feature>
<feature type="strand" evidence="39">
    <location>
        <begin position="574"/>
        <end position="576"/>
    </location>
</feature>
<feature type="helix" evidence="35">
    <location>
        <begin position="578"/>
        <end position="587"/>
    </location>
</feature>
<feature type="strand" evidence="35">
    <location>
        <begin position="591"/>
        <end position="596"/>
    </location>
</feature>
<feature type="helix" evidence="35">
    <location>
        <begin position="598"/>
        <end position="603"/>
    </location>
</feature>
<feature type="strand" evidence="35">
    <location>
        <begin position="605"/>
        <end position="610"/>
    </location>
</feature>
<feature type="strand" evidence="35">
    <location>
        <begin position="615"/>
        <end position="620"/>
    </location>
</feature>
<feature type="helix" evidence="35">
    <location>
        <begin position="621"/>
        <end position="633"/>
    </location>
</feature>
<reference key="1">
    <citation type="journal article" date="1983" name="Proc. Natl. Acad. Sci. U.S.A.">
        <title>Structural and transcriptional evidence for related thrS and infC expression.</title>
        <authorList>
            <person name="Mayaux J.-F."/>
            <person name="Fayat G."/>
            <person name="Fromant M."/>
            <person name="Springer M."/>
            <person name="Grunberg-Manago M."/>
            <person name="Blanquet S."/>
        </authorList>
    </citation>
    <scope>NUCLEOTIDE SEQUENCE [GENOMIC DNA]</scope>
</reference>
<reference key="2">
    <citation type="journal article" date="1996" name="DNA Res.">
        <title>A 570-kb DNA sequence of the Escherichia coli K-12 genome corresponding to the 28.0-40.1 min region on the linkage map.</title>
        <authorList>
            <person name="Aiba H."/>
            <person name="Baba T."/>
            <person name="Fujita K."/>
            <person name="Hayashi K."/>
            <person name="Inada T."/>
            <person name="Isono K."/>
            <person name="Itoh T."/>
            <person name="Kasai H."/>
            <person name="Kashimoto K."/>
            <person name="Kimura S."/>
            <person name="Kitakawa M."/>
            <person name="Kitagawa M."/>
            <person name="Makino K."/>
            <person name="Miki T."/>
            <person name="Mizobuchi K."/>
            <person name="Mori H."/>
            <person name="Mori T."/>
            <person name="Motomura K."/>
            <person name="Nakade S."/>
            <person name="Nakamura Y."/>
            <person name="Nashimoto H."/>
            <person name="Nishio Y."/>
            <person name="Oshima T."/>
            <person name="Saito N."/>
            <person name="Sampei G."/>
            <person name="Seki Y."/>
            <person name="Sivasundaram S."/>
            <person name="Tagami H."/>
            <person name="Takeda J."/>
            <person name="Takemoto K."/>
            <person name="Takeuchi Y."/>
            <person name="Wada C."/>
            <person name="Yamamoto Y."/>
            <person name="Horiuchi T."/>
        </authorList>
    </citation>
    <scope>NUCLEOTIDE SEQUENCE [LARGE SCALE GENOMIC DNA]</scope>
    <source>
        <strain>K12 / W3110 / ATCC 27325 / DSM 5911</strain>
    </source>
</reference>
<reference key="3">
    <citation type="journal article" date="1997" name="Science">
        <title>The complete genome sequence of Escherichia coli K-12.</title>
        <authorList>
            <person name="Blattner F.R."/>
            <person name="Plunkett G. III"/>
            <person name="Bloch C.A."/>
            <person name="Perna N.T."/>
            <person name="Burland V."/>
            <person name="Riley M."/>
            <person name="Collado-Vides J."/>
            <person name="Glasner J.D."/>
            <person name="Rode C.K."/>
            <person name="Mayhew G.F."/>
            <person name="Gregor J."/>
            <person name="Davis N.W."/>
            <person name="Kirkpatrick H.A."/>
            <person name="Goeden M.A."/>
            <person name="Rose D.J."/>
            <person name="Mau B."/>
            <person name="Shao Y."/>
        </authorList>
    </citation>
    <scope>NUCLEOTIDE SEQUENCE [LARGE SCALE GENOMIC DNA]</scope>
    <source>
        <strain>K12 / MG1655 / ATCC 47076</strain>
    </source>
</reference>
<reference key="4">
    <citation type="journal article" date="2006" name="Mol. Syst. Biol.">
        <title>Highly accurate genome sequences of Escherichia coli K-12 strains MG1655 and W3110.</title>
        <authorList>
            <person name="Hayashi K."/>
            <person name="Morooka N."/>
            <person name="Yamamoto Y."/>
            <person name="Fujita K."/>
            <person name="Isono K."/>
            <person name="Choi S."/>
            <person name="Ohtsubo E."/>
            <person name="Baba T."/>
            <person name="Wanner B.L."/>
            <person name="Mori H."/>
            <person name="Horiuchi T."/>
        </authorList>
    </citation>
    <scope>NUCLEOTIDE SEQUENCE [LARGE SCALE GENOMIC DNA]</scope>
    <source>
        <strain>K12 / W3110 / ATCC 27325 / DSM 5911</strain>
    </source>
</reference>
<reference key="5">
    <citation type="journal article" date="1986" name="Proc. Natl. Acad. Sci. U.S.A.">
        <title>Genetic definition of the translational operator of the threonine-tRNA ligase gene in Escherichia coli.</title>
        <authorList>
            <person name="Springer M."/>
            <person name="Graffe M."/>
            <person name="Butler J.S."/>
            <person name="Grunberg-Manago M."/>
        </authorList>
    </citation>
    <scope>NUCLEOTIDE SEQUENCE [GENOMIC DNA] OF 1-47</scope>
    <scope>MECHANISM OF TRANSLATION REGULATION</scope>
</reference>
<reference key="6">
    <citation type="journal article" date="1990" name="J. Mol. Biol.">
        <title>Escherichia coli threonyl-tRNA synthetase and tRNA(Thr) modulate the binding of the ribosome to the translational initiation site of the thrS mRNA.</title>
        <authorList>
            <person name="Moine H."/>
            <person name="Romby P."/>
            <person name="Springer M."/>
            <person name="Grunberg-Manago M."/>
            <person name="Ebel J.P."/>
            <person name="Ehresmann B."/>
            <person name="Ehresmann C."/>
        </authorList>
    </citation>
    <scope>MECHANISM OF TRANSLATION REGULATION</scope>
    <scope>RNA-BINDING</scope>
</reference>
<reference key="7">
    <citation type="journal article" date="1997" name="Electrophoresis">
        <title>Escherichia coli proteome analysis using the gene-protein database.</title>
        <authorList>
            <person name="VanBogelen R.A."/>
            <person name="Abshire K.Z."/>
            <person name="Moldover B."/>
            <person name="Olson E.R."/>
            <person name="Neidhardt F.C."/>
        </authorList>
    </citation>
    <scope>IDENTIFICATION BY 2D-GEL</scope>
</reference>
<reference key="8">
    <citation type="journal article" date="2004" name="Proc. Natl. Acad. Sci. U.S.A.">
        <title>A domain for editing by an archaebacterial tRNA synthetase.</title>
        <authorList>
            <person name="Beebe K."/>
            <person name="Merriman E."/>
            <person name="Ribas De Pouplana L."/>
            <person name="Schimmel P."/>
        </authorList>
    </citation>
    <scope>FUNCTION IN AMINOACYLATION AND EDITING</scope>
    <scope>DOMAIN</scope>
</reference>
<reference key="9">
    <citation type="journal article" date="2005" name="J. Biol. Chem.">
        <title>A unique hydrophobic cluster near the active site contributes to differences in borrelidin inhibition among threonyl-tRNA synthetases.</title>
        <authorList>
            <person name="Ruan B."/>
            <person name="Bovee M.L."/>
            <person name="Sacher M."/>
            <person name="Stathopoulos C."/>
            <person name="Poralla K."/>
            <person name="Francklyn C.S."/>
            <person name="Soell D."/>
        </authorList>
    </citation>
    <scope>FUNCTION</scope>
    <scope>ACTIVITY REGULATION</scope>
    <scope>BIOPHYSICOCHEMICAL PROPERTIES</scope>
    <scope>DISRUPTION PHENOTYPE</scope>
    <scope>ANTIBIOTIC RESISTANCE</scope>
    <scope>MUTAGENESIS OF PRO-296; THR-307; HIS-309; HIS-337 AND LEU-489</scope>
</reference>
<reference key="10">
    <citation type="journal article" date="2008" name="Proc. Natl. Acad. Sci. U.S.A.">
        <title>RNA-assisted catalysis in a protein enzyme: The 2'-hydroxyl of tRNA(Thr) A76 promotes aminoacylation by threonyl-tRNA synthetase.</title>
        <authorList>
            <person name="Minajigi A."/>
            <person name="Francklyn C.S."/>
        </authorList>
    </citation>
    <scope>FUNCTION</scope>
    <scope>REACTION MECHANISM</scope>
    <scope>BIOPHYSICOCHEMICAL PROPERTIES</scope>
    <scope>MUTAGENESIS OF HIS-309; ARG-363; GLN-381; LYS-465 AND GLN-479</scope>
</reference>
<reference key="11">
    <citation type="journal article" date="2009" name="Mol. Cell. Proteomics">
        <title>Lysine acetylation is a highly abundant and evolutionarily conserved modification in Escherichia coli.</title>
        <authorList>
            <person name="Zhang J."/>
            <person name="Sprung R."/>
            <person name="Pei J."/>
            <person name="Tan X."/>
            <person name="Kim S."/>
            <person name="Zhu H."/>
            <person name="Liu C.F."/>
            <person name="Grishin N.V."/>
            <person name="Zhao Y."/>
        </authorList>
    </citation>
    <scope>ACETYLATION [LARGE SCALE ANALYSIS] AT LYS-286</scope>
    <scope>IDENTIFICATION BY MASS SPECTROMETRY</scope>
    <source>
        <strain>K12 / JW1106</strain>
        <strain>K12 / MG1655 / ATCC 47076</strain>
    </source>
</reference>
<reference evidence="23" key="12">
    <citation type="journal article" date="1999" name="Cell">
        <title>The structure of threonyl-tRNA synthetase-tRNA(Thr) complex enlightens its repressor activity and reveals an essential zinc ion in the active site.</title>
        <authorList>
            <person name="Sankaranarayanan R."/>
            <person name="Dock-Bregeon A.-C."/>
            <person name="Romby P."/>
            <person name="Caillet J."/>
            <person name="Springer M."/>
            <person name="Rees B."/>
            <person name="Ehresmann C."/>
            <person name="Ehresmann B."/>
            <person name="Moras D."/>
        </authorList>
    </citation>
    <scope>X-RAY CRYSTALLOGRAPHY (2.9 ANGSTROMS) IN COMPLEX WITH COGNATE TRNA; AMP AND ZINC</scope>
    <scope>FUNCTION</scope>
    <scope>SUBUNIT</scope>
    <scope>DOMAIN</scope>
    <scope>MUTAGENESIS OF CYS-334; HIS-385 AND HIS-511</scope>
</reference>
<reference evidence="21" key="13">
    <citation type="journal article" date="2000" name="Cell">
        <title>Transfer RNA-mediated editing in threonyl-tRNA synthetase. The class II solution to the double discrimination problem.</title>
        <authorList>
            <person name="Dock-Bregeon A."/>
            <person name="Sankaranarayanan R."/>
            <person name="Romby P."/>
            <person name="Caillet J."/>
            <person name="Springer M."/>
            <person name="Rees B."/>
            <person name="Francklyn C.S."/>
            <person name="Ehresmann C."/>
            <person name="Moras D."/>
        </authorList>
    </citation>
    <scope>X-RAY CRYSTALLOGRAPHY (1.65 ANGSTROMS) OF 242-642 IN COMPLEX WITH EDITING SUBSTRATE ANALOG AND ZINC</scope>
    <scope>FUNCTION</scope>
    <scope>SUBUNIT</scope>
    <scope>MUTAGENESIS OF 73-HIS--HIS-77 AND ASP-180</scope>
</reference>
<reference evidence="19 20" key="14">
    <citation type="journal article" date="2000" name="Nat. Struct. Biol.">
        <title>Zinc ion mediated amino acid discrimination by threonyl-tRNA synthetase.</title>
        <authorList>
            <person name="Sankaranarayanan R."/>
            <person name="Dock-Bregeon A.-C."/>
            <person name="Rees B."/>
            <person name="Bovee M."/>
            <person name="Caillet J."/>
            <person name="Romby P."/>
            <person name="Francklyn C.S."/>
            <person name="Moras D."/>
        </authorList>
    </citation>
    <scope>X-RAY CRYSTALLOGRAPHY (1.55 ANGSTROMS) OF 242-642 IN COMPLEX WITH THREONINE AND ITS ANALOG AND ZINC</scope>
    <scope>FUNCTION</scope>
    <scope>CATALYTIC ACTIVITY</scope>
    <scope>SUBUNIT</scope>
</reference>
<reference evidence="22" key="15">
    <citation type="journal article" date="2002" name="Nat. Struct. Biol.">
        <title>Structural basis of translational control by Escherichia coli threonyl tRNA synthetase.</title>
        <authorList>
            <person name="Torres-Larios A."/>
            <person name="Dock-Bregeon A.C."/>
            <person name="Romby P."/>
            <person name="Rees B."/>
            <person name="Sankaranarayanan R."/>
            <person name="Caillet J."/>
            <person name="Springer M."/>
            <person name="Ehresmann C."/>
            <person name="Ehresmann B."/>
            <person name="Moras D."/>
        </authorList>
    </citation>
    <scope>X-RAY CRYSTALLOGRAPHY (3.50 ANGSTROMS) OF 242-642 IN COMPLEX WITH OPERATOR FRAGMENT OF MRNA AND ZINC</scope>
    <scope>FUNCTION</scope>
    <scope>SUBUNIT</scope>
</reference>
<reference evidence="24 25 26 27" key="16">
    <citation type="journal article" date="2004" name="Mol. Cell">
        <title>Achieving error-free translation; the mechanism of proofreading of threonyl-tRNA synthetase at atomic resolution.</title>
        <authorList>
            <person name="Dock-Bregeon A.C."/>
            <person name="Rees B."/>
            <person name="Torres-Larios A."/>
            <person name="Bey G."/>
            <person name="Caillet J."/>
            <person name="Moras D."/>
        </authorList>
    </citation>
    <scope>X-RAY CRYSTALLOGRAPHY (1.46 ANGSTROMS) OF 1-224 (EDITING DOMAIN) IN COMPLEX WITH EDITING ANALOGS</scope>
    <scope>FUNCTION</scope>
    <scope>POSSIBLE EDITING REACTION MECHANISM</scope>
    <scope>DOMAIN</scope>
    <scope>MUTAGENESIS OF LYS-156; CYS-182 AND HIS-186</scope>
</reference>
<reference evidence="28 29 30 31" key="17">
    <citation type="journal article" date="2013" name="J. Med. Chem.">
        <title>Identification of bacteria-selective threonyl-tRNA synthetase substrate inhibitors by structure-based design.</title>
        <authorList>
            <person name="Teng M."/>
            <person name="Hilgers M.T."/>
            <person name="Cunningham M.L."/>
            <person name="Borchardt A."/>
            <person name="Locke J.B."/>
            <person name="Abraham S."/>
            <person name="Haley G."/>
            <person name="Kwan B.P."/>
            <person name="Hall C."/>
            <person name="Hough G.W."/>
            <person name="Shaw K.J."/>
            <person name="Finn J."/>
        </authorList>
    </citation>
    <scope>X-RAY CRYSTALLOGRAPHY (1.70 ANGSTROMS) OF 242-642 IN COMPLEX WITH INHIBITORS AND ZINC</scope>
    <scope>SUBUNIT</scope>
    <scope>BIOTECHNOLOGY</scope>
</reference>
<reference evidence="32 33" key="18">
    <citation type="journal article" date="2015" name="Nat. Commun.">
        <title>Structural basis for full-spectrum inhibition of translational functions on a tRNA synthetase.</title>
        <authorList>
            <person name="Fang P."/>
            <person name="Yu X."/>
            <person name="Jeong S.J."/>
            <person name="Mirando A."/>
            <person name="Chen K."/>
            <person name="Chen X."/>
            <person name="Kim S."/>
            <person name="Francklyn C.S."/>
            <person name="Guo M."/>
        </authorList>
    </citation>
    <scope>X-RAY CRYSTALLOGRAPHY (2.10 ANGSTROMS) OF 242-642 IN COMPLEX WITH BORRELIDIN AND ZINC</scope>
    <scope>ACTIVITY REGULATION</scope>
    <scope>SUBUNIT</scope>
</reference>
<gene>
    <name evidence="1" type="primary">thrS</name>
    <name type="ordered locus">b1719</name>
    <name type="ordered locus">JW1709</name>
</gene>
<dbReference type="EC" id="6.1.1.3" evidence="1 3"/>
<dbReference type="EMBL" id="V00291">
    <property type="protein sequence ID" value="CAA23560.1"/>
    <property type="molecule type" value="Genomic_DNA"/>
</dbReference>
<dbReference type="EMBL" id="U00096">
    <property type="protein sequence ID" value="AAC74789.1"/>
    <property type="molecule type" value="Genomic_DNA"/>
</dbReference>
<dbReference type="EMBL" id="AP009048">
    <property type="protein sequence ID" value="BAA15498.1"/>
    <property type="molecule type" value="Genomic_DNA"/>
</dbReference>
<dbReference type="EMBL" id="M13549">
    <property type="protein sequence ID" value="AAA24674.1"/>
    <property type="molecule type" value="Genomic_DNA"/>
</dbReference>
<dbReference type="PIR" id="G64930">
    <property type="entry name" value="SYECTT"/>
</dbReference>
<dbReference type="RefSeq" id="NP_416234.1">
    <property type="nucleotide sequence ID" value="NC_000913.3"/>
</dbReference>
<dbReference type="RefSeq" id="WP_001144202.1">
    <property type="nucleotide sequence ID" value="NZ_SSZK01000001.1"/>
</dbReference>
<dbReference type="PDB" id="1EVK">
    <property type="method" value="X-ray"/>
    <property type="resolution" value="2.00 A"/>
    <property type="chains" value="A/B=242-642"/>
</dbReference>
<dbReference type="PDB" id="1EVL">
    <property type="method" value="X-ray"/>
    <property type="resolution" value="1.55 A"/>
    <property type="chains" value="A/B/C/D=242-642"/>
</dbReference>
<dbReference type="PDB" id="1FYF">
    <property type="method" value="X-ray"/>
    <property type="resolution" value="1.65 A"/>
    <property type="chains" value="A/B=242-642"/>
</dbReference>
<dbReference type="PDB" id="1KOG">
    <property type="method" value="X-ray"/>
    <property type="resolution" value="3.50 A"/>
    <property type="chains" value="A/B/C/D/E/F/G/H=242-642"/>
</dbReference>
<dbReference type="PDB" id="1QF6">
    <property type="method" value="X-ray"/>
    <property type="resolution" value="2.90 A"/>
    <property type="chains" value="A=1-642"/>
</dbReference>
<dbReference type="PDB" id="1TJE">
    <property type="method" value="X-ray"/>
    <property type="resolution" value="1.50 A"/>
    <property type="chains" value="A=1-224"/>
</dbReference>
<dbReference type="PDB" id="1TKE">
    <property type="method" value="X-ray"/>
    <property type="resolution" value="1.46 A"/>
    <property type="chains" value="A=1-224"/>
</dbReference>
<dbReference type="PDB" id="1TKG">
    <property type="method" value="X-ray"/>
    <property type="resolution" value="1.50 A"/>
    <property type="chains" value="A=1-224"/>
</dbReference>
<dbReference type="PDB" id="1TKY">
    <property type="method" value="X-ray"/>
    <property type="resolution" value="1.48 A"/>
    <property type="chains" value="A=1-224"/>
</dbReference>
<dbReference type="PDB" id="4HWO">
    <property type="method" value="X-ray"/>
    <property type="resolution" value="1.91 A"/>
    <property type="chains" value="A/B=242-642"/>
</dbReference>
<dbReference type="PDB" id="4HWP">
    <property type="method" value="X-ray"/>
    <property type="resolution" value="1.81 A"/>
    <property type="chains" value="A/B=242-642"/>
</dbReference>
<dbReference type="PDB" id="4HWR">
    <property type="method" value="X-ray"/>
    <property type="resolution" value="1.90 A"/>
    <property type="chains" value="A/B=242-642"/>
</dbReference>
<dbReference type="PDB" id="4HWS">
    <property type="method" value="X-ray"/>
    <property type="resolution" value="1.70 A"/>
    <property type="chains" value="A/B=242-642"/>
</dbReference>
<dbReference type="PDB" id="4P3O">
    <property type="method" value="X-ray"/>
    <property type="resolution" value="2.50 A"/>
    <property type="chains" value="A/B=242-642"/>
</dbReference>
<dbReference type="PDB" id="4P3P">
    <property type="method" value="X-ray"/>
    <property type="resolution" value="2.10 A"/>
    <property type="chains" value="A/B=242-642"/>
</dbReference>
<dbReference type="PDB" id="8H98">
    <property type="method" value="X-ray"/>
    <property type="resolution" value="2.50 A"/>
    <property type="chains" value="A/B=242-642"/>
</dbReference>
<dbReference type="PDB" id="8H99">
    <property type="method" value="X-ray"/>
    <property type="resolution" value="1.94 A"/>
    <property type="chains" value="A/B=242-642"/>
</dbReference>
<dbReference type="PDB" id="8H9A">
    <property type="method" value="X-ray"/>
    <property type="resolution" value="1.90 A"/>
    <property type="chains" value="A=242-642"/>
</dbReference>
<dbReference type="PDB" id="8H9B">
    <property type="method" value="X-ray"/>
    <property type="resolution" value="2.23 A"/>
    <property type="chains" value="A=242-642"/>
</dbReference>
<dbReference type="PDB" id="8H9C">
    <property type="method" value="X-ray"/>
    <property type="resolution" value="2.15 A"/>
    <property type="chains" value="A=242-642"/>
</dbReference>
<dbReference type="PDB" id="8OU8">
    <property type="method" value="X-ray"/>
    <property type="resolution" value="2.05 A"/>
    <property type="chains" value="A/D=242-642"/>
</dbReference>
<dbReference type="PDB" id="8QIC">
    <property type="method" value="X-ray"/>
    <property type="resolution" value="2.50 A"/>
    <property type="chains" value="A/D=243-642"/>
</dbReference>
<dbReference type="PDB" id="8WIA">
    <property type="method" value="X-ray"/>
    <property type="resolution" value="1.96 A"/>
    <property type="chains" value="A/B=242-642"/>
</dbReference>
<dbReference type="PDB" id="8WIG">
    <property type="method" value="X-ray"/>
    <property type="resolution" value="3.22 A"/>
    <property type="chains" value="A/B=242-642"/>
</dbReference>
<dbReference type="PDB" id="8WIH">
    <property type="method" value="X-ray"/>
    <property type="resolution" value="2.44 A"/>
    <property type="chains" value="A/B=242-642"/>
</dbReference>
<dbReference type="PDB" id="8WII">
    <property type="method" value="X-ray"/>
    <property type="resolution" value="2.98 A"/>
    <property type="chains" value="A/B=242-642"/>
</dbReference>
<dbReference type="PDB" id="8WIJ">
    <property type="method" value="X-ray"/>
    <property type="resolution" value="3.08 A"/>
    <property type="chains" value="A/B=242-642"/>
</dbReference>
<dbReference type="PDBsum" id="1EVK"/>
<dbReference type="PDBsum" id="1EVL"/>
<dbReference type="PDBsum" id="1FYF"/>
<dbReference type="PDBsum" id="1KOG"/>
<dbReference type="PDBsum" id="1QF6"/>
<dbReference type="PDBsum" id="1TJE"/>
<dbReference type="PDBsum" id="1TKE"/>
<dbReference type="PDBsum" id="1TKG"/>
<dbReference type="PDBsum" id="1TKY"/>
<dbReference type="PDBsum" id="4HWO"/>
<dbReference type="PDBsum" id="4HWP"/>
<dbReference type="PDBsum" id="4HWR"/>
<dbReference type="PDBsum" id="4HWS"/>
<dbReference type="PDBsum" id="4P3O"/>
<dbReference type="PDBsum" id="4P3P"/>
<dbReference type="PDBsum" id="8H98"/>
<dbReference type="PDBsum" id="8H99"/>
<dbReference type="PDBsum" id="8H9A"/>
<dbReference type="PDBsum" id="8H9B"/>
<dbReference type="PDBsum" id="8H9C"/>
<dbReference type="PDBsum" id="8OU8"/>
<dbReference type="PDBsum" id="8QIC"/>
<dbReference type="PDBsum" id="8WIA"/>
<dbReference type="PDBsum" id="8WIG"/>
<dbReference type="PDBsum" id="8WIH"/>
<dbReference type="PDBsum" id="8WII"/>
<dbReference type="PDBsum" id="8WIJ"/>
<dbReference type="SMR" id="P0A8M3"/>
<dbReference type="BioGRID" id="4262193">
    <property type="interactions" value="58"/>
</dbReference>
<dbReference type="BioGRID" id="850582">
    <property type="interactions" value="3"/>
</dbReference>
<dbReference type="DIP" id="DIP-35823N"/>
<dbReference type="FunCoup" id="P0A8M3">
    <property type="interactions" value="935"/>
</dbReference>
<dbReference type="IntAct" id="P0A8M3">
    <property type="interactions" value="50"/>
</dbReference>
<dbReference type="MINT" id="P0A8M3"/>
<dbReference type="STRING" id="511145.b1719"/>
<dbReference type="MoonProt" id="P0A8M3"/>
<dbReference type="iPTMnet" id="P0A8M3"/>
<dbReference type="jPOST" id="P0A8M3"/>
<dbReference type="PaxDb" id="511145-b1719"/>
<dbReference type="EnsemblBacteria" id="AAC74789">
    <property type="protein sequence ID" value="AAC74789"/>
    <property type="gene ID" value="b1719"/>
</dbReference>
<dbReference type="GeneID" id="93775932"/>
<dbReference type="GeneID" id="946222"/>
<dbReference type="KEGG" id="ecj:JW1709"/>
<dbReference type="KEGG" id="eco:b1719"/>
<dbReference type="KEGG" id="ecoc:C3026_09835"/>
<dbReference type="PATRIC" id="fig|1411691.4.peg.538"/>
<dbReference type="EchoBASE" id="EB0994"/>
<dbReference type="eggNOG" id="COG0441">
    <property type="taxonomic scope" value="Bacteria"/>
</dbReference>
<dbReference type="HOGENOM" id="CLU_008554_0_1_6"/>
<dbReference type="InParanoid" id="P0A8M3"/>
<dbReference type="OMA" id="WYADGMY"/>
<dbReference type="OrthoDB" id="9802304at2"/>
<dbReference type="PhylomeDB" id="P0A8M3"/>
<dbReference type="BioCyc" id="EcoCyc:THRS-MONOMER"/>
<dbReference type="BioCyc" id="MetaCyc:THRS-MONOMER"/>
<dbReference type="BRENDA" id="6.1.1.3">
    <property type="organism ID" value="2026"/>
</dbReference>
<dbReference type="SABIO-RK" id="P0A8M3"/>
<dbReference type="EvolutionaryTrace" id="P0A8M3"/>
<dbReference type="PRO" id="PR:P0A8M3"/>
<dbReference type="Proteomes" id="UP000000625">
    <property type="component" value="Chromosome"/>
</dbReference>
<dbReference type="GO" id="GO:0005737">
    <property type="term" value="C:cytoplasm"/>
    <property type="evidence" value="ECO:0000314"/>
    <property type="project" value="EcoliWiki"/>
</dbReference>
<dbReference type="GO" id="GO:0005829">
    <property type="term" value="C:cytosol"/>
    <property type="evidence" value="ECO:0000314"/>
    <property type="project" value="EcoCyc"/>
</dbReference>
<dbReference type="GO" id="GO:0002161">
    <property type="term" value="F:aminoacyl-tRNA deacylase activity"/>
    <property type="evidence" value="ECO:0000314"/>
    <property type="project" value="EcoCyc"/>
</dbReference>
<dbReference type="GO" id="GO:0004812">
    <property type="term" value="F:aminoacyl-tRNA ligase activity"/>
    <property type="evidence" value="ECO:0000314"/>
    <property type="project" value="EcoliWiki"/>
</dbReference>
<dbReference type="GO" id="GO:0005524">
    <property type="term" value="F:ATP binding"/>
    <property type="evidence" value="ECO:0000314"/>
    <property type="project" value="EcoliWiki"/>
</dbReference>
<dbReference type="GO" id="GO:0048027">
    <property type="term" value="F:mRNA 5'-UTR binding"/>
    <property type="evidence" value="ECO:0000314"/>
    <property type="project" value="EcoCyc"/>
</dbReference>
<dbReference type="GO" id="GO:0000900">
    <property type="term" value="F:mRNA regulatory element binding translation repressor activity"/>
    <property type="evidence" value="ECO:0000314"/>
    <property type="project" value="EcoCyc"/>
</dbReference>
<dbReference type="GO" id="GO:0042803">
    <property type="term" value="F:protein homodimerization activity"/>
    <property type="evidence" value="ECO:0000314"/>
    <property type="project" value="EcoCyc"/>
</dbReference>
<dbReference type="GO" id="GO:0003723">
    <property type="term" value="F:RNA binding"/>
    <property type="evidence" value="ECO:0000314"/>
    <property type="project" value="EcoliWiki"/>
</dbReference>
<dbReference type="GO" id="GO:0004829">
    <property type="term" value="F:threonine-tRNA ligase activity"/>
    <property type="evidence" value="ECO:0000314"/>
    <property type="project" value="EcoCyc"/>
</dbReference>
<dbReference type="GO" id="GO:0000049">
    <property type="term" value="F:tRNA binding"/>
    <property type="evidence" value="ECO:0007669"/>
    <property type="project" value="UniProtKB-KW"/>
</dbReference>
<dbReference type="GO" id="GO:0008270">
    <property type="term" value="F:zinc ion binding"/>
    <property type="evidence" value="ECO:0000314"/>
    <property type="project" value="EcoCyc"/>
</dbReference>
<dbReference type="GO" id="GO:0045947">
    <property type="term" value="P:negative regulation of translational initiation"/>
    <property type="evidence" value="ECO:0000315"/>
    <property type="project" value="EcoCyc"/>
</dbReference>
<dbReference type="GO" id="GO:0006417">
    <property type="term" value="P:regulation of translation"/>
    <property type="evidence" value="ECO:0000314"/>
    <property type="project" value="EcoCyc"/>
</dbReference>
<dbReference type="GO" id="GO:0046677">
    <property type="term" value="P:response to antibiotic"/>
    <property type="evidence" value="ECO:0007669"/>
    <property type="project" value="UniProtKB-KW"/>
</dbReference>
<dbReference type="GO" id="GO:0006435">
    <property type="term" value="P:threonyl-tRNA aminoacylation"/>
    <property type="evidence" value="ECO:0000314"/>
    <property type="project" value="EcoCyc"/>
</dbReference>
<dbReference type="GO" id="GO:0043039">
    <property type="term" value="P:tRNA aminoacylation"/>
    <property type="evidence" value="ECO:0000314"/>
    <property type="project" value="EcoliWiki"/>
</dbReference>
<dbReference type="GO" id="GO:0006418">
    <property type="term" value="P:tRNA aminoacylation for protein translation"/>
    <property type="evidence" value="ECO:0000314"/>
    <property type="project" value="EcoliWiki"/>
</dbReference>
<dbReference type="CDD" id="cd01667">
    <property type="entry name" value="TGS_ThrRS"/>
    <property type="match status" value="1"/>
</dbReference>
<dbReference type="CDD" id="cd00860">
    <property type="entry name" value="ThrRS_anticodon"/>
    <property type="match status" value="1"/>
</dbReference>
<dbReference type="CDD" id="cd00771">
    <property type="entry name" value="ThrRS_core"/>
    <property type="match status" value="1"/>
</dbReference>
<dbReference type="FunFam" id="3.10.20.30:FF:000005">
    <property type="entry name" value="Threonine--tRNA ligase"/>
    <property type="match status" value="1"/>
</dbReference>
<dbReference type="FunFam" id="3.30.54.20:FF:000002">
    <property type="entry name" value="Threonine--tRNA ligase"/>
    <property type="match status" value="1"/>
</dbReference>
<dbReference type="FunFam" id="3.30.930.10:FF:000002">
    <property type="entry name" value="Threonine--tRNA ligase"/>
    <property type="match status" value="1"/>
</dbReference>
<dbReference type="FunFam" id="3.40.50.800:FF:000001">
    <property type="entry name" value="Threonine--tRNA ligase"/>
    <property type="match status" value="1"/>
</dbReference>
<dbReference type="FunFam" id="3.30.980.10:FF:000005">
    <property type="entry name" value="Threonyl-tRNA synthetase, mitochondrial"/>
    <property type="match status" value="1"/>
</dbReference>
<dbReference type="Gene3D" id="3.10.20.30">
    <property type="match status" value="1"/>
</dbReference>
<dbReference type="Gene3D" id="3.30.54.20">
    <property type="match status" value="1"/>
</dbReference>
<dbReference type="Gene3D" id="3.40.50.800">
    <property type="entry name" value="Anticodon-binding domain"/>
    <property type="match status" value="1"/>
</dbReference>
<dbReference type="Gene3D" id="3.30.930.10">
    <property type="entry name" value="Bira Bifunctional Protein, Domain 2"/>
    <property type="match status" value="1"/>
</dbReference>
<dbReference type="Gene3D" id="3.30.980.10">
    <property type="entry name" value="Threonyl-trna Synthetase, Chain A, domain 2"/>
    <property type="match status" value="1"/>
</dbReference>
<dbReference type="HAMAP" id="MF_00184">
    <property type="entry name" value="Thr_tRNA_synth"/>
    <property type="match status" value="1"/>
</dbReference>
<dbReference type="InterPro" id="IPR002314">
    <property type="entry name" value="aa-tRNA-synt_IIb"/>
</dbReference>
<dbReference type="InterPro" id="IPR006195">
    <property type="entry name" value="aa-tRNA-synth_II"/>
</dbReference>
<dbReference type="InterPro" id="IPR045864">
    <property type="entry name" value="aa-tRNA-synth_II/BPL/LPL"/>
</dbReference>
<dbReference type="InterPro" id="IPR004154">
    <property type="entry name" value="Anticodon-bd"/>
</dbReference>
<dbReference type="InterPro" id="IPR036621">
    <property type="entry name" value="Anticodon-bd_dom_sf"/>
</dbReference>
<dbReference type="InterPro" id="IPR012675">
    <property type="entry name" value="Beta-grasp_dom_sf"/>
</dbReference>
<dbReference type="InterPro" id="IPR004095">
    <property type="entry name" value="TGS"/>
</dbReference>
<dbReference type="InterPro" id="IPR012676">
    <property type="entry name" value="TGS-like"/>
</dbReference>
<dbReference type="InterPro" id="IPR002320">
    <property type="entry name" value="Thr-tRNA-ligase_IIa"/>
</dbReference>
<dbReference type="InterPro" id="IPR018163">
    <property type="entry name" value="Thr/Ala-tRNA-synth_IIc_edit"/>
</dbReference>
<dbReference type="InterPro" id="IPR047246">
    <property type="entry name" value="ThrRS_anticodon"/>
</dbReference>
<dbReference type="InterPro" id="IPR033728">
    <property type="entry name" value="ThrRS_core"/>
</dbReference>
<dbReference type="InterPro" id="IPR012947">
    <property type="entry name" value="tRNA_SAD"/>
</dbReference>
<dbReference type="NCBIfam" id="TIGR00418">
    <property type="entry name" value="thrS"/>
    <property type="match status" value="1"/>
</dbReference>
<dbReference type="PANTHER" id="PTHR11451:SF44">
    <property type="entry name" value="THREONINE--TRNA LIGASE, CHLOROPLASTIC_MITOCHONDRIAL 2"/>
    <property type="match status" value="1"/>
</dbReference>
<dbReference type="PANTHER" id="PTHR11451">
    <property type="entry name" value="THREONINE-TRNA LIGASE"/>
    <property type="match status" value="1"/>
</dbReference>
<dbReference type="Pfam" id="PF03129">
    <property type="entry name" value="HGTP_anticodon"/>
    <property type="match status" value="1"/>
</dbReference>
<dbReference type="Pfam" id="PF02824">
    <property type="entry name" value="TGS"/>
    <property type="match status" value="1"/>
</dbReference>
<dbReference type="Pfam" id="PF00587">
    <property type="entry name" value="tRNA-synt_2b"/>
    <property type="match status" value="1"/>
</dbReference>
<dbReference type="Pfam" id="PF07973">
    <property type="entry name" value="tRNA_SAD"/>
    <property type="match status" value="1"/>
</dbReference>
<dbReference type="PRINTS" id="PR01047">
    <property type="entry name" value="TRNASYNTHTHR"/>
</dbReference>
<dbReference type="SMART" id="SM00863">
    <property type="entry name" value="tRNA_SAD"/>
    <property type="match status" value="1"/>
</dbReference>
<dbReference type="SUPFAM" id="SSF52954">
    <property type="entry name" value="Class II aaRS ABD-related"/>
    <property type="match status" value="1"/>
</dbReference>
<dbReference type="SUPFAM" id="SSF55681">
    <property type="entry name" value="Class II aaRS and biotin synthetases"/>
    <property type="match status" value="1"/>
</dbReference>
<dbReference type="SUPFAM" id="SSF81271">
    <property type="entry name" value="TGS-like"/>
    <property type="match status" value="1"/>
</dbReference>
<dbReference type="SUPFAM" id="SSF55186">
    <property type="entry name" value="ThrRS/AlaRS common domain"/>
    <property type="match status" value="1"/>
</dbReference>
<dbReference type="PROSITE" id="PS50862">
    <property type="entry name" value="AA_TRNA_LIGASE_II"/>
    <property type="match status" value="1"/>
</dbReference>
<dbReference type="PROSITE" id="PS51880">
    <property type="entry name" value="TGS"/>
    <property type="match status" value="1"/>
</dbReference>
<proteinExistence type="evidence at protein level"/>
<name>SYT_ECOLI</name>
<comment type="function">
    <text evidence="3 4 5 7 9 11">Catalyzes the attachment of threonine to tRNA(Thr) in a two-step reaction: L-threonine is first activated by ATP to form Thr-AMP and then transferred to the acceptor end of tRNA(Thr) (PubMed:10881191, PubMed:15079065, PubMed:18997014). The rate-limiting step is amino acid activation in the presence of tRNA (PubMed:18997014). The 2'-OH of the acceptor base (adenine 76, A76) of tRNA(Thr) and His-309 collaborate to transfer L-Thr to the tRNA; substitution of 2'-OH of A76 with hydrogen or fluorine decreases transfer efficiency 760 and 100-fold respectively (PubMed:18997014). The zinc ion in the active site discriminates against charging of the isosteric amino acid valine (PubMed:10881191). Also activates L-serine, but does not detectably transfer it to tRNA(Thr) (PubMed:15079065). Edits incorrectly charged L-seryl-tRNA(Thr) via its editing domain (PubMed:15079065, PubMed:11136973, PubMed:15525511), in a post-transfer reaction probably via water-mediated hydrolysis (PubMed:15525511).</text>
</comment>
<comment type="function">
    <text evidence="3 6 12 15">ThrS is also a translational repressor protein, it controls binds its own mRNA in the operator region upstream of the start codon (PubMed:3086882). The mRNA region upstream of the start codon has a tRNA-like secondary structure; mRNA and tRNA compete for binding to ThrRS (PubMed:2254931). ThrRS represses translation by preventing the ribosome from to mRNA, and tRNA(Thr) acts as an antirepressor allowing fine level control of enzyme synthesis (PubMed:2254931). X-ray structures prove that operator mRNA and tRNA bind to overlapping sites in the protein (PubMed:10319817, PubMed:11953757).</text>
</comment>
<comment type="catalytic activity">
    <reaction evidence="1 3 4 11">
        <text>tRNA(Thr) + L-threonine + ATP = L-threonyl-tRNA(Thr) + AMP + diphosphate + H(+)</text>
        <dbReference type="Rhea" id="RHEA:24624"/>
        <dbReference type="Rhea" id="RHEA-COMP:9670"/>
        <dbReference type="Rhea" id="RHEA-COMP:9704"/>
        <dbReference type="ChEBI" id="CHEBI:15378"/>
        <dbReference type="ChEBI" id="CHEBI:30616"/>
        <dbReference type="ChEBI" id="CHEBI:33019"/>
        <dbReference type="ChEBI" id="CHEBI:57926"/>
        <dbReference type="ChEBI" id="CHEBI:78442"/>
        <dbReference type="ChEBI" id="CHEBI:78534"/>
        <dbReference type="ChEBI" id="CHEBI:456215"/>
        <dbReference type="EC" id="6.1.1.3"/>
    </reaction>
</comment>
<comment type="cofactor">
    <cofactor evidence="1">
        <name>Zn(2+)</name>
        <dbReference type="ChEBI" id="CHEBI:29105"/>
    </cofactor>
    <text evidence="3 4 5 6 13 14">Binds 1 zinc ion per subunit. It helps recognize and select the amino acid substrate, and thus has neither a purely catalytic or structural role (PubMed:10881191).</text>
</comment>
<comment type="activity regulation">
    <text evidence="8 14">Inhibited non-competitively by borrelidin (BN, KI is 3.7 nM) which binds in a 1:1 stoichiometry, inhibiting L-thr activation (PubMed:15507440). BN binds to 4 distinct subsites in the protein, preventing binding of all 3 substrates; BN also inhibits human ThrRS, and thus it is not useful as an antibiotic (PubMed:25824639).</text>
</comment>
<comment type="biophysicochemical properties">
    <kinetics>
        <KM evidence="8">94 uM for ATP</KM>
        <KM evidence="4 8">110 uM for L-threonine activation</KM>
        <KM evidence="11">120 uM for L-threonine activation</KM>
        <KM evidence="11">0.86 uM for L-threonine aminoacylation</KM>
        <KM evidence="4">1.95 mM for beta-hydroxynorvaline activation</KM>
        <KM evidence="4">81.5 mM for L-serine activation</KM>
        <text evidence="4">kcat is 36, 22 and 26 sec(-1) for L-threonine, beta-hydroxynorvaline and L-serine respectively.</text>
    </kinetics>
</comment>
<comment type="subunit">
    <text evidence="3 4 5 6 13 14">Homodimer (PubMed:10319817, PubMed:11136973, PubMed:10881191, PubMed:11953757, PubMed:23362938, PubMed:25824639); binds 2 tRNA(Thr) per homodimer, each tRNA contacts both monomers and makes specific contacts with the anticodon and acceptor stems (PubMed:10319817).</text>
</comment>
<comment type="interaction">
    <interactant intactId="EBI-551254">
        <id>P0A8M3</id>
    </interactant>
    <interactant intactId="EBI-543771">
        <id>P0A7L0</id>
        <label>rplA</label>
    </interactant>
    <organismsDiffer>false</organismsDiffer>
    <experiments>3</experiments>
</comment>
<comment type="subcellular location">
    <subcellularLocation>
        <location evidence="1">Cytoplasm</location>
    </subcellularLocation>
</comment>
<comment type="domain">
    <text evidence="5 9 17 18">The protein structure shows 2 N-terminal domains, the central catalytic and C-terminal domain (PubMed:10319817). The C-terminal domain recognizes the anticodon region of the tRNA while the acceptor arm is sandwiched between the N-terminal domains and the catalytic domain (PubMed:10319817). The N-terminal also contributes to the precise recognition of tRNA(Thr) (PubMed:10319817). The editing domain encompasses approximately residues 62-224; when it is removed the protein mischarges tRNA(Thr) with L-serine (PubMed:11136973, PubMed:15079065).</text>
</comment>
<comment type="disruption phenotype">
    <text evidence="8">Essential, it cannot be deleted.</text>
</comment>
<comment type="biotechnology">
    <text evidence="13">A number of inhibitors with high affinity for bacterial ThrRS and less affinity for human ThrRS have been identified that might make good antibiotics.</text>
</comment>
<comment type="similarity">
    <text evidence="1">Belongs to the class-II aminoacyl-tRNA synthetase family.</text>
</comment>
<evidence type="ECO:0000255" key="1">
    <source>
        <dbReference type="HAMAP-Rule" id="MF_00184"/>
    </source>
</evidence>
<evidence type="ECO:0000255" key="2">
    <source>
        <dbReference type="PROSITE-ProRule" id="PRU01228"/>
    </source>
</evidence>
<evidence type="ECO:0000269" key="3">
    <source>
    </source>
</evidence>
<evidence type="ECO:0000269" key="4">
    <source>
    </source>
</evidence>
<evidence type="ECO:0000269" key="5">
    <source>
    </source>
</evidence>
<evidence type="ECO:0000269" key="6">
    <source>
    </source>
</evidence>
<evidence type="ECO:0000269" key="7">
    <source>
    </source>
</evidence>
<evidence type="ECO:0000269" key="8">
    <source>
    </source>
</evidence>
<evidence type="ECO:0000269" key="9">
    <source>
    </source>
</evidence>
<evidence type="ECO:0000269" key="10">
    <source>
    </source>
</evidence>
<evidence type="ECO:0000269" key="11">
    <source>
    </source>
</evidence>
<evidence type="ECO:0000269" key="12">
    <source>
    </source>
</evidence>
<evidence type="ECO:0000269" key="13">
    <source>
    </source>
</evidence>
<evidence type="ECO:0000269" key="14">
    <source>
    </source>
</evidence>
<evidence type="ECO:0000269" key="15">
    <source>
    </source>
</evidence>
<evidence type="ECO:0000305" key="16"/>
<evidence type="ECO:0000305" key="17">
    <source>
    </source>
</evidence>
<evidence type="ECO:0000305" key="18">
    <source>
    </source>
</evidence>
<evidence type="ECO:0007744" key="19">
    <source>
        <dbReference type="PDB" id="1EVK"/>
    </source>
</evidence>
<evidence type="ECO:0007744" key="20">
    <source>
        <dbReference type="PDB" id="1EVL"/>
    </source>
</evidence>
<evidence type="ECO:0007744" key="21">
    <source>
        <dbReference type="PDB" id="1FYF"/>
    </source>
</evidence>
<evidence type="ECO:0007744" key="22">
    <source>
        <dbReference type="PDB" id="1KOG"/>
    </source>
</evidence>
<evidence type="ECO:0007744" key="23">
    <source>
        <dbReference type="PDB" id="1QF6"/>
    </source>
</evidence>
<evidence type="ECO:0007744" key="24">
    <source>
        <dbReference type="PDB" id="1TJE"/>
    </source>
</evidence>
<evidence type="ECO:0007744" key="25">
    <source>
        <dbReference type="PDB" id="1TKE"/>
    </source>
</evidence>
<evidence type="ECO:0007744" key="26">
    <source>
        <dbReference type="PDB" id="1TKG"/>
    </source>
</evidence>
<evidence type="ECO:0007744" key="27">
    <source>
        <dbReference type="PDB" id="1TKY"/>
    </source>
</evidence>
<evidence type="ECO:0007744" key="28">
    <source>
        <dbReference type="PDB" id="4HWO"/>
    </source>
</evidence>
<evidence type="ECO:0007744" key="29">
    <source>
        <dbReference type="PDB" id="4HWP"/>
    </source>
</evidence>
<evidence type="ECO:0007744" key="30">
    <source>
        <dbReference type="PDB" id="4HWR"/>
    </source>
</evidence>
<evidence type="ECO:0007744" key="31">
    <source>
        <dbReference type="PDB" id="4HWS"/>
    </source>
</evidence>
<evidence type="ECO:0007744" key="32">
    <source>
        <dbReference type="PDB" id="4P3O"/>
    </source>
</evidence>
<evidence type="ECO:0007744" key="33">
    <source>
        <dbReference type="PDB" id="4P3P"/>
    </source>
</evidence>
<evidence type="ECO:0007829" key="34">
    <source>
        <dbReference type="PDB" id="1EVK"/>
    </source>
</evidence>
<evidence type="ECO:0007829" key="35">
    <source>
        <dbReference type="PDB" id="1EVL"/>
    </source>
</evidence>
<evidence type="ECO:0007829" key="36">
    <source>
        <dbReference type="PDB" id="1QF6"/>
    </source>
</evidence>
<evidence type="ECO:0007829" key="37">
    <source>
        <dbReference type="PDB" id="1TKE"/>
    </source>
</evidence>
<evidence type="ECO:0007829" key="38">
    <source>
        <dbReference type="PDB" id="4HWR"/>
    </source>
</evidence>
<evidence type="ECO:0007829" key="39">
    <source>
        <dbReference type="PDB" id="4P3O"/>
    </source>
</evidence>
<evidence type="ECO:0007829" key="40">
    <source>
        <dbReference type="PDB" id="8OU8"/>
    </source>
</evidence>